<comment type="subcellular location">
    <subcellularLocation>
        <location evidence="2">Secreted</location>
    </subcellularLocation>
</comment>
<comment type="tissue specificity">
    <text evidence="4">Expressed by the venom gland.</text>
</comment>
<comment type="toxic dose">
    <text evidence="2">LD(50) is 11.7 mg/kg by intravenous injection.</text>
</comment>
<comment type="miscellaneous">
    <text evidence="4">Is classified as a P-type cytotoxin, since a proline residue stands at position 28 (Pro-31 in standard classification).</text>
</comment>
<comment type="similarity">
    <text evidence="4">Belongs to the three-finger toxin family. Short-chain subfamily. Orphan group XX sub-subfamily.</text>
</comment>
<sequence>LECYQKSKVVTCQPEQKFCYSDTMTFFPNHPVYLSGCTFCRTDESGERCCTTDRCNK</sequence>
<protein>
    <recommendedName>
        <fullName evidence="3">Weak toxin CM-1b</fullName>
    </recommendedName>
</protein>
<organism>
    <name type="scientific">Hemachatus haemachatus</name>
    <name type="common">Rinkhals</name>
    <name type="synonym">Sepedon haemachatus</name>
    <dbReference type="NCBI Taxonomy" id="8626"/>
    <lineage>
        <taxon>Eukaryota</taxon>
        <taxon>Metazoa</taxon>
        <taxon>Chordata</taxon>
        <taxon>Craniata</taxon>
        <taxon>Vertebrata</taxon>
        <taxon>Euteleostomi</taxon>
        <taxon>Lepidosauria</taxon>
        <taxon>Squamata</taxon>
        <taxon>Bifurcata</taxon>
        <taxon>Unidentata</taxon>
        <taxon>Episquamata</taxon>
        <taxon>Toxicofera</taxon>
        <taxon>Serpentes</taxon>
        <taxon>Colubroidea</taxon>
        <taxon>Elapidae</taxon>
        <taxon>Elapinae</taxon>
        <taxon>Hemachatus</taxon>
    </lineage>
</organism>
<evidence type="ECO:0000250" key="1">
    <source>
        <dbReference type="UniProtKB" id="P60301"/>
    </source>
</evidence>
<evidence type="ECO:0000269" key="2">
    <source>
    </source>
</evidence>
<evidence type="ECO:0000303" key="3">
    <source>
    </source>
</evidence>
<evidence type="ECO:0000305" key="4"/>
<name>3SOK1_HEMHA</name>
<proteinExistence type="evidence at protein level"/>
<feature type="chain" id="PRO_0000093626" description="Weak toxin CM-1b" evidence="2">
    <location>
        <begin position="1"/>
        <end position="57"/>
    </location>
</feature>
<feature type="disulfide bond" evidence="1">
    <location>
        <begin position="3"/>
        <end position="19"/>
    </location>
</feature>
<feature type="disulfide bond" evidence="1">
    <location>
        <begin position="12"/>
        <end position="37"/>
    </location>
</feature>
<feature type="disulfide bond" evidence="1">
    <location>
        <begin position="40"/>
        <end position="49"/>
    </location>
</feature>
<feature type="disulfide bond" evidence="1">
    <location>
        <begin position="50"/>
        <end position="55"/>
    </location>
</feature>
<dbReference type="PIR" id="A01673">
    <property type="entry name" value="T2NJBE"/>
</dbReference>
<dbReference type="SMR" id="P01402"/>
<dbReference type="GO" id="GO:0005576">
    <property type="term" value="C:extracellular region"/>
    <property type="evidence" value="ECO:0007669"/>
    <property type="project" value="UniProtKB-SubCell"/>
</dbReference>
<dbReference type="GO" id="GO:0090729">
    <property type="term" value="F:toxin activity"/>
    <property type="evidence" value="ECO:0007669"/>
    <property type="project" value="UniProtKB-KW"/>
</dbReference>
<dbReference type="CDD" id="cd00206">
    <property type="entry name" value="TFP_snake_toxin"/>
    <property type="match status" value="1"/>
</dbReference>
<dbReference type="Gene3D" id="2.10.60.10">
    <property type="entry name" value="CD59"/>
    <property type="match status" value="1"/>
</dbReference>
<dbReference type="InterPro" id="IPR003571">
    <property type="entry name" value="Snake_3FTx"/>
</dbReference>
<dbReference type="InterPro" id="IPR045860">
    <property type="entry name" value="Snake_toxin-like_sf"/>
</dbReference>
<dbReference type="InterPro" id="IPR054131">
    <property type="entry name" value="Toxin_cobra-type"/>
</dbReference>
<dbReference type="Pfam" id="PF21947">
    <property type="entry name" value="Toxin_cobra-type"/>
    <property type="match status" value="1"/>
</dbReference>
<dbReference type="SUPFAM" id="SSF57302">
    <property type="entry name" value="Snake toxin-like"/>
    <property type="match status" value="1"/>
</dbReference>
<reference key="1">
    <citation type="journal article" date="1980" name="Toxicon">
        <title>The complete primary structure of toxin CM-1b from Hemachatus haemachatus (Ringhals) snake venom.</title>
        <authorList>
            <person name="Joubert F.J."/>
            <person name="Taljaard N."/>
        </authorList>
    </citation>
    <scope>PROTEIN SEQUENCE</scope>
    <scope>TOXIC DOSE</scope>
    <scope>SUBCELLULAR LOCATION</scope>
    <source>
        <tissue>Venom</tissue>
    </source>
</reference>
<accession>P01402</accession>
<keyword id="KW-0903">Direct protein sequencing</keyword>
<keyword id="KW-1015">Disulfide bond</keyword>
<keyword id="KW-0964">Secreted</keyword>
<keyword id="KW-0800">Toxin</keyword>